<reference key="1">
    <citation type="journal article" date="2004" name="Nat. Genet.">
        <title>Complete sequencing and characterization of 21,243 full-length human cDNAs.</title>
        <authorList>
            <person name="Ota T."/>
            <person name="Suzuki Y."/>
            <person name="Nishikawa T."/>
            <person name="Otsuki T."/>
            <person name="Sugiyama T."/>
            <person name="Irie R."/>
            <person name="Wakamatsu A."/>
            <person name="Hayashi K."/>
            <person name="Sato H."/>
            <person name="Nagai K."/>
            <person name="Kimura K."/>
            <person name="Makita H."/>
            <person name="Sekine M."/>
            <person name="Obayashi M."/>
            <person name="Nishi T."/>
            <person name="Shibahara T."/>
            <person name="Tanaka T."/>
            <person name="Ishii S."/>
            <person name="Yamamoto J."/>
            <person name="Saito K."/>
            <person name="Kawai Y."/>
            <person name="Isono Y."/>
            <person name="Nakamura Y."/>
            <person name="Nagahari K."/>
            <person name="Murakami K."/>
            <person name="Yasuda T."/>
            <person name="Iwayanagi T."/>
            <person name="Wagatsuma M."/>
            <person name="Shiratori A."/>
            <person name="Sudo H."/>
            <person name="Hosoiri T."/>
            <person name="Kaku Y."/>
            <person name="Kodaira H."/>
            <person name="Kondo H."/>
            <person name="Sugawara M."/>
            <person name="Takahashi M."/>
            <person name="Kanda K."/>
            <person name="Yokoi T."/>
            <person name="Furuya T."/>
            <person name="Kikkawa E."/>
            <person name="Omura Y."/>
            <person name="Abe K."/>
            <person name="Kamihara K."/>
            <person name="Katsuta N."/>
            <person name="Sato K."/>
            <person name="Tanikawa M."/>
            <person name="Yamazaki M."/>
            <person name="Ninomiya K."/>
            <person name="Ishibashi T."/>
            <person name="Yamashita H."/>
            <person name="Murakawa K."/>
            <person name="Fujimori K."/>
            <person name="Tanai H."/>
            <person name="Kimata M."/>
            <person name="Watanabe M."/>
            <person name="Hiraoka S."/>
            <person name="Chiba Y."/>
            <person name="Ishida S."/>
            <person name="Ono Y."/>
            <person name="Takiguchi S."/>
            <person name="Watanabe S."/>
            <person name="Yosida M."/>
            <person name="Hotuta T."/>
            <person name="Kusano J."/>
            <person name="Kanehori K."/>
            <person name="Takahashi-Fujii A."/>
            <person name="Hara H."/>
            <person name="Tanase T.-O."/>
            <person name="Nomura Y."/>
            <person name="Togiya S."/>
            <person name="Komai F."/>
            <person name="Hara R."/>
            <person name="Takeuchi K."/>
            <person name="Arita M."/>
            <person name="Imose N."/>
            <person name="Musashino K."/>
            <person name="Yuuki H."/>
            <person name="Oshima A."/>
            <person name="Sasaki N."/>
            <person name="Aotsuka S."/>
            <person name="Yoshikawa Y."/>
            <person name="Matsunawa H."/>
            <person name="Ichihara T."/>
            <person name="Shiohata N."/>
            <person name="Sano S."/>
            <person name="Moriya S."/>
            <person name="Momiyama H."/>
            <person name="Satoh N."/>
            <person name="Takami S."/>
            <person name="Terashima Y."/>
            <person name="Suzuki O."/>
            <person name="Nakagawa S."/>
            <person name="Senoh A."/>
            <person name="Mizoguchi H."/>
            <person name="Goto Y."/>
            <person name="Shimizu F."/>
            <person name="Wakebe H."/>
            <person name="Hishigaki H."/>
            <person name="Watanabe T."/>
            <person name="Sugiyama A."/>
            <person name="Takemoto M."/>
            <person name="Kawakami B."/>
            <person name="Yamazaki M."/>
            <person name="Watanabe K."/>
            <person name="Kumagai A."/>
            <person name="Itakura S."/>
            <person name="Fukuzumi Y."/>
            <person name="Fujimori Y."/>
            <person name="Komiyama M."/>
            <person name="Tashiro H."/>
            <person name="Tanigami A."/>
            <person name="Fujiwara T."/>
            <person name="Ono T."/>
            <person name="Yamada K."/>
            <person name="Fujii Y."/>
            <person name="Ozaki K."/>
            <person name="Hirao M."/>
            <person name="Ohmori Y."/>
            <person name="Kawabata A."/>
            <person name="Hikiji T."/>
            <person name="Kobatake N."/>
            <person name="Inagaki H."/>
            <person name="Ikema Y."/>
            <person name="Okamoto S."/>
            <person name="Okitani R."/>
            <person name="Kawakami T."/>
            <person name="Noguchi S."/>
            <person name="Itoh T."/>
            <person name="Shigeta K."/>
            <person name="Senba T."/>
            <person name="Matsumura K."/>
            <person name="Nakajima Y."/>
            <person name="Mizuno T."/>
            <person name="Morinaga M."/>
            <person name="Sasaki M."/>
            <person name="Togashi T."/>
            <person name="Oyama M."/>
            <person name="Hata H."/>
            <person name="Watanabe M."/>
            <person name="Komatsu T."/>
            <person name="Mizushima-Sugano J."/>
            <person name="Satoh T."/>
            <person name="Shirai Y."/>
            <person name="Takahashi Y."/>
            <person name="Nakagawa K."/>
            <person name="Okumura K."/>
            <person name="Nagase T."/>
            <person name="Nomura N."/>
            <person name="Kikuchi H."/>
            <person name="Masuho Y."/>
            <person name="Yamashita R."/>
            <person name="Nakai K."/>
            <person name="Yada T."/>
            <person name="Nakamura Y."/>
            <person name="Ohara O."/>
            <person name="Isogai T."/>
            <person name="Sugano S."/>
        </authorList>
    </citation>
    <scope>NUCLEOTIDE SEQUENCE [LARGE SCALE MRNA]</scope>
</reference>
<reference key="2">
    <citation type="journal article" date="2006" name="Nature">
        <title>DNA sequence and analysis of human chromosome 8.</title>
        <authorList>
            <person name="Nusbaum C."/>
            <person name="Mikkelsen T.S."/>
            <person name="Zody M.C."/>
            <person name="Asakawa S."/>
            <person name="Taudien S."/>
            <person name="Garber M."/>
            <person name="Kodira C.D."/>
            <person name="Schueler M.G."/>
            <person name="Shimizu A."/>
            <person name="Whittaker C.A."/>
            <person name="Chang J.L."/>
            <person name="Cuomo C.A."/>
            <person name="Dewar K."/>
            <person name="FitzGerald M.G."/>
            <person name="Yang X."/>
            <person name="Allen N.R."/>
            <person name="Anderson S."/>
            <person name="Asakawa T."/>
            <person name="Blechschmidt K."/>
            <person name="Bloom T."/>
            <person name="Borowsky M.L."/>
            <person name="Butler J."/>
            <person name="Cook A."/>
            <person name="Corum B."/>
            <person name="DeArellano K."/>
            <person name="DeCaprio D."/>
            <person name="Dooley K.T."/>
            <person name="Dorris L. III"/>
            <person name="Engels R."/>
            <person name="Gloeckner G."/>
            <person name="Hafez N."/>
            <person name="Hagopian D.S."/>
            <person name="Hall J.L."/>
            <person name="Ishikawa S.K."/>
            <person name="Jaffe D.B."/>
            <person name="Kamat A."/>
            <person name="Kudoh J."/>
            <person name="Lehmann R."/>
            <person name="Lokitsang T."/>
            <person name="Macdonald P."/>
            <person name="Major J.E."/>
            <person name="Matthews C.D."/>
            <person name="Mauceli E."/>
            <person name="Menzel U."/>
            <person name="Mihalev A.H."/>
            <person name="Minoshima S."/>
            <person name="Murayama Y."/>
            <person name="Naylor J.W."/>
            <person name="Nicol R."/>
            <person name="Nguyen C."/>
            <person name="O'Leary S.B."/>
            <person name="O'Neill K."/>
            <person name="Parker S.C.J."/>
            <person name="Polley A."/>
            <person name="Raymond C.K."/>
            <person name="Reichwald K."/>
            <person name="Rodriguez J."/>
            <person name="Sasaki T."/>
            <person name="Schilhabel M."/>
            <person name="Siddiqui R."/>
            <person name="Smith C.L."/>
            <person name="Sneddon T.P."/>
            <person name="Talamas J.A."/>
            <person name="Tenzin P."/>
            <person name="Topham K."/>
            <person name="Venkataraman V."/>
            <person name="Wen G."/>
            <person name="Yamazaki S."/>
            <person name="Young S.K."/>
            <person name="Zeng Q."/>
            <person name="Zimmer A.R."/>
            <person name="Rosenthal A."/>
            <person name="Birren B.W."/>
            <person name="Platzer M."/>
            <person name="Shimizu N."/>
            <person name="Lander E.S."/>
        </authorList>
    </citation>
    <scope>NUCLEOTIDE SEQUENCE [LARGE SCALE GENOMIC DNA]</scope>
</reference>
<reference key="3">
    <citation type="journal article" date="2004" name="Genome Res.">
        <title>The status, quality, and expansion of the NIH full-length cDNA project: the Mammalian Gene Collection (MGC).</title>
        <authorList>
            <consortium name="The MGC Project Team"/>
        </authorList>
    </citation>
    <scope>NUCLEOTIDE SEQUENCE [LARGE SCALE MRNA]</scope>
    <source>
        <tissue>Brain</tissue>
    </source>
</reference>
<reference key="4">
    <citation type="journal article" date="2002" name="Science">
        <title>The protein kinase complement of the human genome.</title>
        <authorList>
            <person name="Manning G."/>
            <person name="Whyte D.B."/>
            <person name="Martinez R."/>
            <person name="Hunter T."/>
            <person name="Sudarsanam S."/>
        </authorList>
    </citation>
    <scope>IDENTIFICATION</scope>
</reference>
<reference key="5">
    <citation type="journal article" date="2012" name="Proc. Natl. Acad. Sci. U.S.A.">
        <title>N-terminal acetylome analyses and functional insights of the N-terminal acetyltransferase NatB.</title>
        <authorList>
            <person name="Van Damme P."/>
            <person name="Lasa M."/>
            <person name="Polevoda B."/>
            <person name="Gazquez C."/>
            <person name="Elosegui-Artola A."/>
            <person name="Kim D.S."/>
            <person name="De Juan-Pardo E."/>
            <person name="Demeyer K."/>
            <person name="Hole K."/>
            <person name="Larrea E."/>
            <person name="Timmerman E."/>
            <person name="Prieto J."/>
            <person name="Arnesen T."/>
            <person name="Sherman F."/>
            <person name="Gevaert K."/>
            <person name="Aldabe R."/>
        </authorList>
    </citation>
    <scope>ACETYLATION [LARGE SCALE ANALYSIS] AT MET-1</scope>
    <scope>IDENTIFICATION BY MASS SPECTROMETRY [LARGE SCALE ANALYSIS]</scope>
</reference>
<reference key="6">
    <citation type="journal article" date="2007" name="Nature">
        <title>Patterns of somatic mutation in human cancer genomes.</title>
        <authorList>
            <person name="Greenman C."/>
            <person name="Stephens P."/>
            <person name="Smith R."/>
            <person name="Dalgliesh G.L."/>
            <person name="Hunter C."/>
            <person name="Bignell G."/>
            <person name="Davies H."/>
            <person name="Teague J."/>
            <person name="Butler A."/>
            <person name="Stevens C."/>
            <person name="Edkins S."/>
            <person name="O'Meara S."/>
            <person name="Vastrik I."/>
            <person name="Schmidt E.E."/>
            <person name="Avis T."/>
            <person name="Barthorpe S."/>
            <person name="Bhamra G."/>
            <person name="Buck G."/>
            <person name="Choudhury B."/>
            <person name="Clements J."/>
            <person name="Cole J."/>
            <person name="Dicks E."/>
            <person name="Forbes S."/>
            <person name="Gray K."/>
            <person name="Halliday K."/>
            <person name="Harrison R."/>
            <person name="Hills K."/>
            <person name="Hinton J."/>
            <person name="Jenkinson A."/>
            <person name="Jones D."/>
            <person name="Menzies A."/>
            <person name="Mironenko T."/>
            <person name="Perry J."/>
            <person name="Raine K."/>
            <person name="Richardson D."/>
            <person name="Shepherd R."/>
            <person name="Small A."/>
            <person name="Tofts C."/>
            <person name="Varian J."/>
            <person name="Webb T."/>
            <person name="West S."/>
            <person name="Widaa S."/>
            <person name="Yates A."/>
            <person name="Cahill D.P."/>
            <person name="Louis D.N."/>
            <person name="Goldstraw P."/>
            <person name="Nicholson A.G."/>
            <person name="Brasseur F."/>
            <person name="Looijenga L."/>
            <person name="Weber B.L."/>
            <person name="Chiew Y.-E."/>
            <person name="DeFazio A."/>
            <person name="Greaves M.F."/>
            <person name="Green A.R."/>
            <person name="Campbell P."/>
            <person name="Birney E."/>
            <person name="Easton D.F."/>
            <person name="Chenevix-Trench G."/>
            <person name="Tan M.-H."/>
            <person name="Khoo S.K."/>
            <person name="Teh B.T."/>
            <person name="Yuen S.T."/>
            <person name="Leung S.Y."/>
            <person name="Wooster R."/>
            <person name="Futreal P.A."/>
            <person name="Stratton M.R."/>
        </authorList>
    </citation>
    <scope>VARIANTS [LARGE SCALE ANALYSIS] PRO-48; PHE-140; MET-254; THR-301 AND ILE-342</scope>
</reference>
<reference key="7">
    <citation type="journal article" date="2013" name="Science">
        <title>SGK196 is a glycosylation-specific O-mannose kinase required for dystroglycan function.</title>
        <authorList>
            <person name="Yoshida-Moriguchi T."/>
            <person name="Willer T."/>
            <person name="Anderson M.E."/>
            <person name="Venzke D."/>
            <person name="Whyte T."/>
            <person name="Muntoni F."/>
            <person name="Lee H."/>
            <person name="Nelson S.F."/>
            <person name="Yu L."/>
            <person name="Campbell K.P."/>
        </authorList>
    </citation>
    <scope>FUNCTION</scope>
    <scope>CATALYTIC ACTIVITY</scope>
    <scope>BIOPHYSICOCHEMICAL PROPERTIES</scope>
    <scope>CHARACTERIZATION OF VARIANT MDDGA12 ARG-137</scope>
</reference>
<reference key="8">
    <citation type="journal article" date="2014" name="J. Med. Genet.">
        <title>POMK mutation in a family with congenital muscular dystrophy with merosin deficiency, hypomyelination, mild hearing deficit and intellectual disability.</title>
        <authorList>
            <person name="von Renesse A."/>
            <person name="Petkova M.V."/>
            <person name="Luetzkendorf S."/>
            <person name="Heinemeyer J."/>
            <person name="Gill E."/>
            <person name="Huebner C."/>
            <person name="von Moers A."/>
            <person name="Stenzel W."/>
            <person name="Schuelke M."/>
        </authorList>
    </citation>
    <scope>INVOLVEMENT IN MDDGA12</scope>
</reference>
<reference key="9">
    <citation type="journal article" date="2014" name="Hum. Mol. Genet.">
        <title>POMK mutations disrupt muscle development leading to a spectrum of neuromuscular presentations.</title>
        <authorList>
            <person name="Di Costanzo S."/>
            <person name="Balasubramanian A."/>
            <person name="Pond H.L."/>
            <person name="Rozkalne A."/>
            <person name="Pantaleoni C."/>
            <person name="Saredi S."/>
            <person name="Gupta V.A."/>
            <person name="Sunu C.M."/>
            <person name="Yu T.W."/>
            <person name="Kang P.B."/>
            <person name="Salih M.A."/>
            <person name="Mora M."/>
            <person name="Gussoni E."/>
            <person name="Walsh C.A."/>
            <person name="Manzini M.C."/>
        </authorList>
    </citation>
    <scope>TISSUE SPECIFICITY</scope>
    <scope>INVOLVEMENT IN MDDGC12</scope>
    <scope>VARIANT MDDGA12 ASP-302</scope>
</reference>
<reference key="10">
    <citation type="journal article" date="2013" name="Science">
        <title>Deciphering the glycosylome of dystroglycanopathies using haploid screens for lassa virus entry.</title>
        <authorList>
            <person name="Jae L.T."/>
            <person name="Raaben M."/>
            <person name="Riemersma M."/>
            <person name="van Beusekom E."/>
            <person name="Blomen V.A."/>
            <person name="Velds A."/>
            <person name="Kerkhoven R.M."/>
            <person name="Carette J.E."/>
            <person name="Topaloglu H."/>
            <person name="Meinecke P."/>
            <person name="Wessels M.W."/>
            <person name="Lefeber D.J."/>
            <person name="Whelan S.P."/>
            <person name="van Bokhoven H."/>
            <person name="Brummelkamp T.R."/>
        </authorList>
    </citation>
    <scope>VARIANTS MDDGA12 ARG-137 AND ARG-258</scope>
    <scope>FUNCTION</scope>
    <scope>INVOLVEMENT IN MDDGA12</scope>
</reference>
<sequence>MEKQPQNSRRGLAPREVPPAVGLLLIMALMNTLLYLCLDHFFIAPRQSTVDPTHCPYGHFRIGQMKNCSPWLSCEELRTEVRQLKRVGEGAVKRVFLSEWKEHKVALSQLTSLEMKDDFLHGLQMLKSLQGTHVVTLLGYCEDDNTMLTEYHPLGSLSNLEETLNLSKYQNVNTWQHRLELAMDYVSIINYLHHSPVGTRVMCDSNDLPKTLSQYLLTSNFSILANDLDALPLVNHSSGMLVKCGHRELHGDFVAPEQLWPYGEDVPFHDDLMPSYDEKIDIWKIPDISSFLLGHIEGSDMVRFHLFDIHKACKSQTPSERPTAQDVLETYQKVLDTLRDAMMSQAREML</sequence>
<feature type="chain" id="PRO_0000262996" description="Protein O-mannose kinase">
    <location>
        <begin position="1"/>
        <end position="350"/>
    </location>
</feature>
<feature type="topological domain" description="Cytoplasmic" evidence="1">
    <location>
        <begin position="1"/>
        <end position="20"/>
    </location>
</feature>
<feature type="transmembrane region" description="Helical; Signal-anchor for type II membrane protein" evidence="1">
    <location>
        <begin position="21"/>
        <end position="43"/>
    </location>
</feature>
<feature type="topological domain" description="Lumenal" evidence="1">
    <location>
        <begin position="44"/>
        <end position="350"/>
    </location>
</feature>
<feature type="domain" description="Protein kinase" evidence="2">
    <location>
        <begin position="81"/>
        <end position="350"/>
    </location>
</feature>
<feature type="modified residue" description="N-acetylmethionine" evidence="10">
    <location>
        <position position="1"/>
    </location>
</feature>
<feature type="glycosylation site" description="N-linked (GlcNAc...) asparagine" evidence="1">
    <location>
        <position position="165"/>
    </location>
</feature>
<feature type="glycosylation site" description="N-linked (GlcNAc...) asparagine" evidence="1">
    <location>
        <position position="220"/>
    </location>
</feature>
<feature type="glycosylation site" description="N-linked (GlcNAc...) asparagine" evidence="1">
    <location>
        <position position="235"/>
    </location>
</feature>
<feature type="sequence variant" id="VAR_041372" description="In dbSNP:rs34466747." evidence="3">
    <original>S</original>
    <variation>P</variation>
    <location>
        <position position="48"/>
    </location>
</feature>
<feature type="sequence variant" id="VAR_069625" description="In MDDGA12; loss of kinase activity; dbSNP:rs397509385." evidence="4 5">
    <original>L</original>
    <variation>R</variation>
    <location>
        <position position="137"/>
    </location>
</feature>
<feature type="sequence variant" id="VAR_041373" description="In dbSNP:rs34750053." evidence="3">
    <original>Y</original>
    <variation>F</variation>
    <location>
        <position position="140"/>
    </location>
</feature>
<feature type="sequence variant" id="VAR_041374" description="In dbSNP:rs34715198." evidence="3">
    <original>V</original>
    <variation>M</variation>
    <location>
        <position position="254"/>
    </location>
</feature>
<feature type="sequence variant" id="VAR_069626" description="In MDDGA12; dbSNP:rs397509386." evidence="4">
    <original>Q</original>
    <variation>R</variation>
    <location>
        <position position="258"/>
    </location>
</feature>
<feature type="sequence variant" id="VAR_041375" description="In dbSNP:rs33920561." evidence="3">
    <original>M</original>
    <variation>T</variation>
    <location>
        <position position="301"/>
    </location>
</feature>
<feature type="sequence variant" id="VAR_072560" description="In MDDGA12; dbSNP:rs199756983." evidence="7">
    <original>V</original>
    <variation>D</variation>
    <location>
        <position position="302"/>
    </location>
</feature>
<feature type="sequence variant" id="VAR_041376" description="In a lung small cell carcinoma sample; somatic mutation." evidence="3">
    <original>M</original>
    <variation>I</variation>
    <location>
        <position position="342"/>
    </location>
</feature>
<dbReference type="EC" id="2.7.1.183" evidence="5"/>
<dbReference type="EMBL" id="AK027009">
    <property type="protein sequence ID" value="BAB15623.1"/>
    <property type="molecule type" value="mRNA"/>
</dbReference>
<dbReference type="EMBL" id="AC113191">
    <property type="status" value="NOT_ANNOTATED_CDS"/>
    <property type="molecule type" value="Genomic_DNA"/>
</dbReference>
<dbReference type="EMBL" id="BC101548">
    <property type="protein sequence ID" value="AAI01549.1"/>
    <property type="molecule type" value="mRNA"/>
</dbReference>
<dbReference type="EMBL" id="BC113703">
    <property type="protein sequence ID" value="AAI13704.1"/>
    <property type="molecule type" value="mRNA"/>
</dbReference>
<dbReference type="CCDS" id="CCDS6141.1"/>
<dbReference type="RefSeq" id="NP_001264900.1">
    <property type="nucleotide sequence ID" value="NM_001277971.2"/>
</dbReference>
<dbReference type="RefSeq" id="NP_115613.1">
    <property type="nucleotide sequence ID" value="NM_032237.5"/>
</dbReference>
<dbReference type="SMR" id="Q9H5K3"/>
<dbReference type="BioGRID" id="123942">
    <property type="interactions" value="308"/>
</dbReference>
<dbReference type="FunCoup" id="Q9H5K3">
    <property type="interactions" value="771"/>
</dbReference>
<dbReference type="IntAct" id="Q9H5K3">
    <property type="interactions" value="238"/>
</dbReference>
<dbReference type="STRING" id="9606.ENSP00000331258"/>
<dbReference type="GlyConnect" id="1664">
    <property type="glycosylation" value="3 N-Linked glycans (1 site)"/>
</dbReference>
<dbReference type="GlyCosmos" id="Q9H5K3">
    <property type="glycosylation" value="4 sites, 3 glycans"/>
</dbReference>
<dbReference type="GlyGen" id="Q9H5K3">
    <property type="glycosylation" value="5 sites, 8 N-linked glycans (2 sites), 1 O-linked glycan (1 site)"/>
</dbReference>
<dbReference type="iPTMnet" id="Q9H5K3"/>
<dbReference type="PhosphoSitePlus" id="Q9H5K3"/>
<dbReference type="SwissPalm" id="Q9H5K3"/>
<dbReference type="BioMuta" id="POMK"/>
<dbReference type="DMDM" id="74761446"/>
<dbReference type="CPTAC" id="non-CPTAC-5675"/>
<dbReference type="jPOST" id="Q9H5K3"/>
<dbReference type="MassIVE" id="Q9H5K3"/>
<dbReference type="PaxDb" id="9606-ENSP00000331258"/>
<dbReference type="PeptideAtlas" id="Q9H5K3"/>
<dbReference type="ProteomicsDB" id="80917"/>
<dbReference type="Pumba" id="Q9H5K3"/>
<dbReference type="Antibodypedia" id="24208">
    <property type="antibodies" value="259 antibodies from 22 providers"/>
</dbReference>
<dbReference type="DNASU" id="84197"/>
<dbReference type="Ensembl" id="ENST00000331373.10">
    <property type="protein sequence ID" value="ENSP00000331258.5"/>
    <property type="gene ID" value="ENSG00000185900.11"/>
</dbReference>
<dbReference type="Ensembl" id="ENST00000676193.1">
    <property type="protein sequence ID" value="ENSP00000502774.1"/>
    <property type="gene ID" value="ENSG00000185900.11"/>
</dbReference>
<dbReference type="GeneID" id="84197"/>
<dbReference type="KEGG" id="hsa:84197"/>
<dbReference type="MANE-Select" id="ENST00000331373.10">
    <property type="protein sequence ID" value="ENSP00000331258.5"/>
    <property type="RefSeq nucleotide sequence ID" value="NM_032237.5"/>
    <property type="RefSeq protein sequence ID" value="NP_115613.1"/>
</dbReference>
<dbReference type="UCSC" id="uc003xpw.4">
    <property type="organism name" value="human"/>
</dbReference>
<dbReference type="AGR" id="HGNC:26267"/>
<dbReference type="CTD" id="84197"/>
<dbReference type="DisGeNET" id="84197"/>
<dbReference type="GeneCards" id="POMK"/>
<dbReference type="HGNC" id="HGNC:26267">
    <property type="gene designation" value="POMK"/>
</dbReference>
<dbReference type="HPA" id="ENSG00000185900">
    <property type="expression patterns" value="Low tissue specificity"/>
</dbReference>
<dbReference type="MalaCards" id="POMK"/>
<dbReference type="MIM" id="615247">
    <property type="type" value="gene"/>
</dbReference>
<dbReference type="MIM" id="615249">
    <property type="type" value="phenotype"/>
</dbReference>
<dbReference type="MIM" id="616094">
    <property type="type" value="phenotype"/>
</dbReference>
<dbReference type="neXtProt" id="NX_Q9H5K3"/>
<dbReference type="OpenTargets" id="ENSG00000185900"/>
<dbReference type="Orphanet" id="370959">
    <property type="disease" value="Congenital muscular dystrophy with cerebellar involvement"/>
</dbReference>
<dbReference type="Orphanet" id="445110">
    <property type="disease" value="Limb-girdle muscular dystrophy due to POMK deficiency"/>
</dbReference>
<dbReference type="Orphanet" id="899">
    <property type="disease" value="Walker-Warburg syndrome"/>
</dbReference>
<dbReference type="VEuPathDB" id="HostDB:ENSG00000185900"/>
<dbReference type="eggNOG" id="ENOG502QQQV">
    <property type="taxonomic scope" value="Eukaryota"/>
</dbReference>
<dbReference type="GeneTree" id="ENSGT00390000004945"/>
<dbReference type="HOGENOM" id="CLU_067581_0_0_1"/>
<dbReference type="InParanoid" id="Q9H5K3"/>
<dbReference type="OMA" id="NTWHRRL"/>
<dbReference type="OrthoDB" id="4062651at2759"/>
<dbReference type="PAN-GO" id="Q9H5K3">
    <property type="GO annotations" value="5 GO annotations based on evolutionary models"/>
</dbReference>
<dbReference type="PhylomeDB" id="Q9H5K3"/>
<dbReference type="BioCyc" id="MetaCyc:G66-30734-MONOMER"/>
<dbReference type="BRENDA" id="2.7.1.183">
    <property type="organism ID" value="2681"/>
</dbReference>
<dbReference type="PathwayCommons" id="Q9H5K3"/>
<dbReference type="Reactome" id="R-HSA-5173105">
    <property type="pathway name" value="O-linked glycosylation"/>
</dbReference>
<dbReference type="SignaLink" id="Q9H5K3"/>
<dbReference type="BioGRID-ORCS" id="84197">
    <property type="hits" value="14 hits in 1145 CRISPR screens"/>
</dbReference>
<dbReference type="ChiTaRS" id="POMK">
    <property type="organism name" value="human"/>
</dbReference>
<dbReference type="GenomeRNAi" id="84197"/>
<dbReference type="Pharos" id="Q9H5K3">
    <property type="development level" value="Tbio"/>
</dbReference>
<dbReference type="PRO" id="PR:Q9H5K3"/>
<dbReference type="Proteomes" id="UP000005640">
    <property type="component" value="Chromosome 8"/>
</dbReference>
<dbReference type="RNAct" id="Q9H5K3">
    <property type="molecule type" value="protein"/>
</dbReference>
<dbReference type="Bgee" id="ENSG00000185900">
    <property type="expression patterns" value="Expressed in paraflocculus and 208 other cell types or tissues"/>
</dbReference>
<dbReference type="ExpressionAtlas" id="Q9H5K3">
    <property type="expression patterns" value="baseline and differential"/>
</dbReference>
<dbReference type="GO" id="GO:0005789">
    <property type="term" value="C:endoplasmic reticulum membrane"/>
    <property type="evidence" value="ECO:0000318"/>
    <property type="project" value="GO_Central"/>
</dbReference>
<dbReference type="GO" id="GO:0005524">
    <property type="term" value="F:ATP binding"/>
    <property type="evidence" value="ECO:0007669"/>
    <property type="project" value="UniProtKB-KW"/>
</dbReference>
<dbReference type="GO" id="GO:0019200">
    <property type="term" value="F:carbohydrate kinase activity"/>
    <property type="evidence" value="ECO:0000318"/>
    <property type="project" value="GO_Central"/>
</dbReference>
<dbReference type="GO" id="GO:0016773">
    <property type="term" value="F:phosphotransferase activity, alcohol group as acceptor"/>
    <property type="evidence" value="ECO:0000314"/>
    <property type="project" value="UniProtKB"/>
</dbReference>
<dbReference type="GO" id="GO:0004672">
    <property type="term" value="F:protein kinase activity"/>
    <property type="evidence" value="ECO:0007669"/>
    <property type="project" value="InterPro"/>
</dbReference>
<dbReference type="GO" id="GO:0007420">
    <property type="term" value="P:brain development"/>
    <property type="evidence" value="ECO:0000304"/>
    <property type="project" value="UniProtKB"/>
</dbReference>
<dbReference type="GO" id="GO:0046835">
    <property type="term" value="P:carbohydrate phosphorylation"/>
    <property type="evidence" value="ECO:0000314"/>
    <property type="project" value="UniProtKB"/>
</dbReference>
<dbReference type="GO" id="GO:0007611">
    <property type="term" value="P:learning or memory"/>
    <property type="evidence" value="ECO:0007669"/>
    <property type="project" value="Ensembl"/>
</dbReference>
<dbReference type="GO" id="GO:0050905">
    <property type="term" value="P:neuromuscular process"/>
    <property type="evidence" value="ECO:0007669"/>
    <property type="project" value="Ensembl"/>
</dbReference>
<dbReference type="GO" id="GO:0006493">
    <property type="term" value="P:protein O-linked glycosylation"/>
    <property type="evidence" value="ECO:0000314"/>
    <property type="project" value="UniProtKB"/>
</dbReference>
<dbReference type="GO" id="GO:0019233">
    <property type="term" value="P:sensory perception of pain"/>
    <property type="evidence" value="ECO:0007669"/>
    <property type="project" value="Ensembl"/>
</dbReference>
<dbReference type="FunFam" id="1.10.510.10:FF:000464">
    <property type="entry name" value="Protein O-mannose kinase"/>
    <property type="match status" value="1"/>
</dbReference>
<dbReference type="Gene3D" id="1.10.510.10">
    <property type="entry name" value="Transferase(Phosphotransferase) domain 1"/>
    <property type="match status" value="1"/>
</dbReference>
<dbReference type="InterPro" id="IPR011009">
    <property type="entry name" value="Kinase-like_dom_sf"/>
</dbReference>
<dbReference type="InterPro" id="IPR039318">
    <property type="entry name" value="POMK"/>
</dbReference>
<dbReference type="InterPro" id="IPR000719">
    <property type="entry name" value="Prot_kinase_dom"/>
</dbReference>
<dbReference type="InterPro" id="IPR001245">
    <property type="entry name" value="Ser-Thr/Tyr_kinase_cat_dom"/>
</dbReference>
<dbReference type="PANTHER" id="PTHR22618">
    <property type="entry name" value="PROTEIN O-MANNOSE KINASE"/>
    <property type="match status" value="1"/>
</dbReference>
<dbReference type="PANTHER" id="PTHR22618:SF2">
    <property type="entry name" value="PROTEIN O-MANNOSE KINASE"/>
    <property type="match status" value="1"/>
</dbReference>
<dbReference type="Pfam" id="PF07714">
    <property type="entry name" value="PK_Tyr_Ser-Thr"/>
    <property type="match status" value="1"/>
</dbReference>
<dbReference type="SUPFAM" id="SSF56112">
    <property type="entry name" value="Protein kinase-like (PK-like)"/>
    <property type="match status" value="1"/>
</dbReference>
<dbReference type="PROSITE" id="PS50011">
    <property type="entry name" value="PROTEIN_KINASE_DOM"/>
    <property type="match status" value="1"/>
</dbReference>
<protein>
    <recommendedName>
        <fullName>Protein O-mannose kinase</fullName>
        <shortName>POMK</shortName>
        <ecNumber evidence="5">2.7.1.183</ecNumber>
    </recommendedName>
    <alternativeName>
        <fullName>Protein kinase-like protein SgK196</fullName>
    </alternativeName>
    <alternativeName>
        <fullName>Sugen kinase 196</fullName>
    </alternativeName>
</protein>
<proteinExistence type="evidence at protein level"/>
<comment type="function">
    <text evidence="4 5">Protein O-mannose kinase that specifically mediates phosphorylation at the 6-position of an O-mannose of the trisaccharide (N-acetylgalactosamine (GalNAc)-beta-1,3-N-acetylglucosamine (GlcNAc)-beta-1,4-mannose) to generate phosphorylated O-mannosyl trisaccharide (N-acetylgalactosamine-beta-1,3-N-acetylglucosamine-beta-1,4-(phosphate-6-)mannose). Phosphorylated O-mannosyl trisaccharide is a carbohydrate structure present in alpha-dystroglycan (DAG1), which is required for binding laminin G-like domain-containing extracellular proteins with high affinity. Only shows kinase activity when the GalNAc-beta-3-GlcNAc-beta-terminus is linked to the 4-position of O-mannose, suggesting that this disaccharide serves as the substrate recognition motif.</text>
</comment>
<comment type="catalytic activity">
    <reaction evidence="5">
        <text>3-O-[beta-D-GalNAc-(1-&gt;3)-beta-D-GlcNAc-(1-&gt;4)-alpha-D-Man]-L-Thr-[protein] + ATP = 3-O-[beta-D-GalNAc-(1-&gt;3)-beta-D-GlcNAc-(1-&gt;4)-(O-6-P-alpha-D-Man)]-Thr-[protein] + ADP + H(+)</text>
        <dbReference type="Rhea" id="RHEA:52616"/>
        <dbReference type="Rhea" id="RHEA-COMP:13308"/>
        <dbReference type="Rhea" id="RHEA-COMP:13309"/>
        <dbReference type="ChEBI" id="CHEBI:15378"/>
        <dbReference type="ChEBI" id="CHEBI:30616"/>
        <dbReference type="ChEBI" id="CHEBI:136709"/>
        <dbReference type="ChEBI" id="CHEBI:136710"/>
        <dbReference type="ChEBI" id="CHEBI:456216"/>
        <dbReference type="EC" id="2.7.1.183"/>
    </reaction>
</comment>
<comment type="biophysicochemical properties">
    <kinetics>
        <KM evidence="5">4.1 uM for ATP</KM>
    </kinetics>
</comment>
<comment type="interaction">
    <interactant intactId="EBI-11337900">
        <id>Q9H5K3</id>
    </interactant>
    <interactant intactId="EBI-3917958">
        <id>O94766</id>
        <label>B3GAT3</label>
    </interactant>
    <organismsDiffer>false</organismsDiffer>
    <experiments>2</experiments>
</comment>
<comment type="interaction">
    <interactant intactId="EBI-11337900">
        <id>Q9H5K3</id>
    </interactant>
    <interactant intactId="EBI-725665">
        <id>Q9Y5U9</id>
        <label>IER3IP1</label>
    </interactant>
    <organismsDiffer>false</organismsDiffer>
    <experiments>3</experiments>
</comment>
<comment type="interaction">
    <interactant intactId="EBI-11337900">
        <id>Q9H5K3</id>
    </interactant>
    <interactant intactId="EBI-12070086">
        <id>Q5J8X5</id>
        <label>MS4A13</label>
    </interactant>
    <organismsDiffer>false</organismsDiffer>
    <experiments>3</experiments>
</comment>
<comment type="interaction">
    <interactant intactId="EBI-11337900">
        <id>Q9H5K3</id>
    </interactant>
    <interactant intactId="EBI-3912424">
        <id>Q8WZA1</id>
        <label>POMGNT1</label>
    </interactant>
    <organismsDiffer>false</organismsDiffer>
    <experiments>2</experiments>
</comment>
<comment type="interaction">
    <interactant intactId="EBI-11337900">
        <id>Q9H5K3</id>
    </interactant>
    <interactant intactId="EBI-355963">
        <id>P04843</id>
        <label>RPN1</label>
    </interactant>
    <organismsDiffer>false</organismsDiffer>
    <experiments>2</experiments>
</comment>
<comment type="interaction">
    <interactant intactId="EBI-11337900">
        <id>Q9H5K3</id>
    </interactant>
    <interactant intactId="EBI-719731">
        <id>P04844</id>
        <label>RPN2</label>
    </interactant>
    <organismsDiffer>false</organismsDiffer>
    <experiments>2</experiments>
</comment>
<comment type="interaction">
    <interactant intactId="EBI-11337900">
        <id>Q9H5K3</id>
    </interactant>
    <interactant intactId="EBI-719212">
        <id>P46977</id>
        <label>STT3A</label>
    </interactant>
    <organismsDiffer>false</organismsDiffer>
    <experiments>2</experiments>
</comment>
<comment type="subcellular location">
    <subcellularLocation>
        <location evidence="8">Endoplasmic reticulum membrane</location>
        <topology evidence="8">Single-pass type II membrane protein</topology>
    </subcellularLocation>
</comment>
<comment type="tissue specificity">
    <text evidence="7">Highest expression is observed in brain, skeletal muscle, kidney and heart in fetal and adult tissues.</text>
</comment>
<comment type="disease" evidence="4 5 6 7">
    <disease id="DI-03721">
        <name>Muscular dystrophy-dystroglycanopathy congenital with brain and eye anomalies A12</name>
        <acronym>MDDGA12</acronym>
        <description>An autosomal recessive disorder characterized by congenital muscular dystrophy associated with cobblestone lissencephaly and other brain anomalies, eye malformations, profound intellectual disability, and death usually in the first years of life. Included diseases are the more severe Walker-Warburg syndrome and the slightly less severe muscle-eye-brain disease.</description>
        <dbReference type="MIM" id="615249"/>
    </disease>
    <text>The disease is caused by variants affecting the gene represented in this entry.</text>
</comment>
<comment type="disease" evidence="7">
    <disease id="DI-04274">
        <name>Muscular dystrophy-dystroglycanopathy limb-girdle C12</name>
        <acronym>MDDGC12</acronym>
        <description>An autosomal recessive limb-girdle congenital muscular dystrophy, characterized by muscle weakness and delayed motor development in association with cognitive impairment.</description>
        <dbReference type="MIM" id="616094"/>
    </disease>
    <text>The disease is caused by variants affecting the gene represented in this entry.</text>
</comment>
<comment type="similarity">
    <text evidence="2">Belongs to the protein kinase superfamily. Ser/Thr protein kinase family. STKL subfamily.</text>
</comment>
<comment type="caution">
    <text evidence="9">Although related to the Ser/Thr protein kinase family, has no protein kinase activity and acts as a mannose kinase instead.</text>
</comment>
<gene>
    <name type="primary">POMK</name>
    <name type="synonym">SGK196</name>
</gene>
<keyword id="KW-0007">Acetylation</keyword>
<keyword id="KW-0067">ATP-binding</keyword>
<keyword id="KW-0912">Congenital muscular dystrophy</keyword>
<keyword id="KW-0225">Disease variant</keyword>
<keyword id="KW-1215">Dystroglycanopathy</keyword>
<keyword id="KW-0256">Endoplasmic reticulum</keyword>
<keyword id="KW-0325">Glycoprotein</keyword>
<keyword id="KW-0418">Kinase</keyword>
<keyword id="KW-0947">Limb-girdle muscular dystrophy</keyword>
<keyword id="KW-0451">Lissencephaly</keyword>
<keyword id="KW-0472">Membrane</keyword>
<keyword id="KW-0547">Nucleotide-binding</keyword>
<keyword id="KW-1267">Proteomics identification</keyword>
<keyword id="KW-1185">Reference proteome</keyword>
<keyword id="KW-0735">Signal-anchor</keyword>
<keyword id="KW-0808">Transferase</keyword>
<keyword id="KW-0812">Transmembrane</keyword>
<keyword id="KW-1133">Transmembrane helix</keyword>
<evidence type="ECO:0000255" key="1"/>
<evidence type="ECO:0000255" key="2">
    <source>
        <dbReference type="PROSITE-ProRule" id="PRU00159"/>
    </source>
</evidence>
<evidence type="ECO:0000269" key="3">
    <source>
    </source>
</evidence>
<evidence type="ECO:0000269" key="4">
    <source>
    </source>
</evidence>
<evidence type="ECO:0000269" key="5">
    <source>
    </source>
</evidence>
<evidence type="ECO:0000269" key="6">
    <source>
    </source>
</evidence>
<evidence type="ECO:0000269" key="7">
    <source>
    </source>
</evidence>
<evidence type="ECO:0000305" key="8"/>
<evidence type="ECO:0000305" key="9">
    <source>
    </source>
</evidence>
<evidence type="ECO:0007744" key="10">
    <source>
    </source>
</evidence>
<name>SG196_HUMAN</name>
<accession>Q9H5K3</accession>
<organism>
    <name type="scientific">Homo sapiens</name>
    <name type="common">Human</name>
    <dbReference type="NCBI Taxonomy" id="9606"/>
    <lineage>
        <taxon>Eukaryota</taxon>
        <taxon>Metazoa</taxon>
        <taxon>Chordata</taxon>
        <taxon>Craniata</taxon>
        <taxon>Vertebrata</taxon>
        <taxon>Euteleostomi</taxon>
        <taxon>Mammalia</taxon>
        <taxon>Eutheria</taxon>
        <taxon>Euarchontoglires</taxon>
        <taxon>Primates</taxon>
        <taxon>Haplorrhini</taxon>
        <taxon>Catarrhini</taxon>
        <taxon>Hominidae</taxon>
        <taxon>Homo</taxon>
    </lineage>
</organism>